<accession>A1TE43</accession>
<keyword id="KW-0175">Coiled coil</keyword>
<keyword id="KW-0238">DNA-binding</keyword>
<keyword id="KW-0804">Transcription</keyword>
<keyword id="KW-0805">Transcription regulation</keyword>
<sequence length="164" mass="18035">MTDTQVTWLTEESYDRLKAELDQLIANRPVIAAEINDRREEGDLRENGGYHAAREQQGQEEARIRQLQELLNNAKVGEAPKQSGIALPGSVVKVYYDDDEKDTETFLIGTREQGVSDGKLEVYSPNSPLGGALIDAKVGESRSYTVPSGNTVKVTLVSAEPYHG</sequence>
<dbReference type="EMBL" id="CP000511">
    <property type="protein sequence ID" value="ABM15443.1"/>
    <property type="molecule type" value="Genomic_DNA"/>
</dbReference>
<dbReference type="RefSeq" id="WP_011781818.1">
    <property type="nucleotide sequence ID" value="NZ_JACKSD010000119.1"/>
</dbReference>
<dbReference type="SMR" id="A1TE43"/>
<dbReference type="STRING" id="350058.Mvan_4668"/>
<dbReference type="KEGG" id="mva:Mvan_4668"/>
<dbReference type="eggNOG" id="COG0782">
    <property type="taxonomic scope" value="Bacteria"/>
</dbReference>
<dbReference type="HOGENOM" id="CLU_101379_0_0_11"/>
<dbReference type="Proteomes" id="UP000009159">
    <property type="component" value="Chromosome"/>
</dbReference>
<dbReference type="GO" id="GO:0003677">
    <property type="term" value="F:DNA binding"/>
    <property type="evidence" value="ECO:0007669"/>
    <property type="project" value="UniProtKB-UniRule"/>
</dbReference>
<dbReference type="GO" id="GO:0070063">
    <property type="term" value="F:RNA polymerase binding"/>
    <property type="evidence" value="ECO:0007669"/>
    <property type="project" value="InterPro"/>
</dbReference>
<dbReference type="GO" id="GO:0006354">
    <property type="term" value="P:DNA-templated transcription elongation"/>
    <property type="evidence" value="ECO:0007669"/>
    <property type="project" value="TreeGrafter"/>
</dbReference>
<dbReference type="GO" id="GO:0032784">
    <property type="term" value="P:regulation of DNA-templated transcription elongation"/>
    <property type="evidence" value="ECO:0007669"/>
    <property type="project" value="UniProtKB-UniRule"/>
</dbReference>
<dbReference type="FunFam" id="1.10.287.180:FF:000001">
    <property type="entry name" value="Transcription elongation factor GreA"/>
    <property type="match status" value="1"/>
</dbReference>
<dbReference type="Gene3D" id="3.10.50.30">
    <property type="entry name" value="Transcription elongation factor, GreA/GreB, C-terminal domain"/>
    <property type="match status" value="1"/>
</dbReference>
<dbReference type="Gene3D" id="1.10.287.180">
    <property type="entry name" value="Transcription elongation factor, GreA/GreB, N-terminal domain"/>
    <property type="match status" value="1"/>
</dbReference>
<dbReference type="HAMAP" id="MF_00105">
    <property type="entry name" value="GreA_GreB"/>
    <property type="match status" value="1"/>
</dbReference>
<dbReference type="InterPro" id="IPR036953">
    <property type="entry name" value="GreA/GreB_C_sf"/>
</dbReference>
<dbReference type="InterPro" id="IPR018151">
    <property type="entry name" value="TF_GreA/GreB_CS"/>
</dbReference>
<dbReference type="InterPro" id="IPR006359">
    <property type="entry name" value="Tscrpt_elong_fac_GreA"/>
</dbReference>
<dbReference type="InterPro" id="IPR028624">
    <property type="entry name" value="Tscrpt_elong_fac_GreA/B"/>
</dbReference>
<dbReference type="InterPro" id="IPR001437">
    <property type="entry name" value="Tscrpt_elong_fac_GreA/B_C"/>
</dbReference>
<dbReference type="InterPro" id="IPR023459">
    <property type="entry name" value="Tscrpt_elong_fac_GreA/B_fam"/>
</dbReference>
<dbReference type="InterPro" id="IPR022691">
    <property type="entry name" value="Tscrpt_elong_fac_GreA/B_N"/>
</dbReference>
<dbReference type="InterPro" id="IPR036805">
    <property type="entry name" value="Tscrpt_elong_fac_GreA/B_N_sf"/>
</dbReference>
<dbReference type="NCBIfam" id="TIGR01462">
    <property type="entry name" value="greA"/>
    <property type="match status" value="1"/>
</dbReference>
<dbReference type="NCBIfam" id="NF001262">
    <property type="entry name" value="PRK00226.1-3"/>
    <property type="match status" value="1"/>
</dbReference>
<dbReference type="PANTHER" id="PTHR30437">
    <property type="entry name" value="TRANSCRIPTION ELONGATION FACTOR GREA"/>
    <property type="match status" value="1"/>
</dbReference>
<dbReference type="PANTHER" id="PTHR30437:SF4">
    <property type="entry name" value="TRANSCRIPTION ELONGATION FACTOR GREA"/>
    <property type="match status" value="1"/>
</dbReference>
<dbReference type="Pfam" id="PF01272">
    <property type="entry name" value="GreA_GreB"/>
    <property type="match status" value="1"/>
</dbReference>
<dbReference type="Pfam" id="PF03449">
    <property type="entry name" value="GreA_GreB_N"/>
    <property type="match status" value="1"/>
</dbReference>
<dbReference type="PIRSF" id="PIRSF006092">
    <property type="entry name" value="GreA_GreB"/>
    <property type="match status" value="1"/>
</dbReference>
<dbReference type="SUPFAM" id="SSF54534">
    <property type="entry name" value="FKBP-like"/>
    <property type="match status" value="1"/>
</dbReference>
<dbReference type="SUPFAM" id="SSF46557">
    <property type="entry name" value="GreA transcript cleavage protein, N-terminal domain"/>
    <property type="match status" value="1"/>
</dbReference>
<dbReference type="PROSITE" id="PS00829">
    <property type="entry name" value="GREAB_1"/>
    <property type="match status" value="1"/>
</dbReference>
<dbReference type="PROSITE" id="PS00830">
    <property type="entry name" value="GREAB_2"/>
    <property type="match status" value="1"/>
</dbReference>
<reference key="1">
    <citation type="submission" date="2006-12" db="EMBL/GenBank/DDBJ databases">
        <title>Complete sequence of Mycobacterium vanbaalenii PYR-1.</title>
        <authorList>
            <consortium name="US DOE Joint Genome Institute"/>
            <person name="Copeland A."/>
            <person name="Lucas S."/>
            <person name="Lapidus A."/>
            <person name="Barry K."/>
            <person name="Detter J.C."/>
            <person name="Glavina del Rio T."/>
            <person name="Hammon N."/>
            <person name="Israni S."/>
            <person name="Dalin E."/>
            <person name="Tice H."/>
            <person name="Pitluck S."/>
            <person name="Singan V."/>
            <person name="Schmutz J."/>
            <person name="Larimer F."/>
            <person name="Land M."/>
            <person name="Hauser L."/>
            <person name="Kyrpides N."/>
            <person name="Anderson I.J."/>
            <person name="Miller C."/>
            <person name="Richardson P."/>
        </authorList>
    </citation>
    <scope>NUCLEOTIDE SEQUENCE [LARGE SCALE GENOMIC DNA]</scope>
    <source>
        <strain>DSM 7251 / JCM 13017 / BCRC 16820 / KCTC 9966 / NRRL B-24157 / PYR-1</strain>
    </source>
</reference>
<gene>
    <name evidence="1" type="primary">greA</name>
    <name type="ordered locus">Mvan_4668</name>
</gene>
<organism>
    <name type="scientific">Mycolicibacterium vanbaalenii (strain DSM 7251 / JCM 13017 / BCRC 16820 / KCTC 9966 / NRRL B-24157 / PYR-1)</name>
    <name type="common">Mycobacterium vanbaalenii</name>
    <dbReference type="NCBI Taxonomy" id="350058"/>
    <lineage>
        <taxon>Bacteria</taxon>
        <taxon>Bacillati</taxon>
        <taxon>Actinomycetota</taxon>
        <taxon>Actinomycetes</taxon>
        <taxon>Mycobacteriales</taxon>
        <taxon>Mycobacteriaceae</taxon>
        <taxon>Mycolicibacterium</taxon>
    </lineage>
</organism>
<proteinExistence type="inferred from homology"/>
<name>GREA_MYCVP</name>
<feature type="chain" id="PRO_1000034283" description="Transcription elongation factor GreA">
    <location>
        <begin position="1"/>
        <end position="164"/>
    </location>
</feature>
<feature type="coiled-coil region" evidence="1">
    <location>
        <begin position="11"/>
        <end position="76"/>
    </location>
</feature>
<comment type="function">
    <text evidence="1">Necessary for efficient RNA polymerase transcription elongation past template-encoded arresting sites. The arresting sites in DNA have the property of trapping a certain fraction of elongating RNA polymerases that pass through, resulting in locked ternary complexes. Cleavage of the nascent transcript by cleavage factors such as GreA or GreB allows the resumption of elongation from the new 3'terminus. GreA releases sequences of 2 to 3 nucleotides.</text>
</comment>
<comment type="similarity">
    <text evidence="1">Belongs to the GreA/GreB family.</text>
</comment>
<evidence type="ECO:0000255" key="1">
    <source>
        <dbReference type="HAMAP-Rule" id="MF_00105"/>
    </source>
</evidence>
<protein>
    <recommendedName>
        <fullName evidence="1">Transcription elongation factor GreA</fullName>
    </recommendedName>
    <alternativeName>
        <fullName evidence="1">Transcript cleavage factor GreA</fullName>
    </alternativeName>
</protein>